<organism>
    <name type="scientific">Glycine max</name>
    <name type="common">Soybean</name>
    <name type="synonym">Glycine hispida</name>
    <dbReference type="NCBI Taxonomy" id="3847"/>
    <lineage>
        <taxon>Eukaryota</taxon>
        <taxon>Viridiplantae</taxon>
        <taxon>Streptophyta</taxon>
        <taxon>Embryophyta</taxon>
        <taxon>Tracheophyta</taxon>
        <taxon>Spermatophyta</taxon>
        <taxon>Magnoliopsida</taxon>
        <taxon>eudicotyledons</taxon>
        <taxon>Gunneridae</taxon>
        <taxon>Pentapetalae</taxon>
        <taxon>rosids</taxon>
        <taxon>fabids</taxon>
        <taxon>Fabales</taxon>
        <taxon>Fabaceae</taxon>
        <taxon>Papilionoideae</taxon>
        <taxon>50 kb inversion clade</taxon>
        <taxon>NPAAA clade</taxon>
        <taxon>indigoferoid/millettioid clade</taxon>
        <taxon>Phaseoleae</taxon>
        <taxon>Glycine</taxon>
        <taxon>Glycine subgen. Soja</taxon>
    </lineage>
</organism>
<evidence type="ECO:0000255" key="1"/>
<evidence type="ECO:0000256" key="2">
    <source>
        <dbReference type="SAM" id="MobiDB-lite"/>
    </source>
</evidence>
<evidence type="ECO:0000305" key="3"/>
<comment type="function">
    <text>Probably functions in cell division and growth processes.</text>
</comment>
<comment type="subcellular location">
    <subcellularLocation>
        <location>Cell membrane</location>
        <topology>Peripheral membrane protein</topology>
    </subcellularLocation>
</comment>
<comment type="similarity">
    <text evidence="3">Belongs to the AAA ATPase family.</text>
</comment>
<sequence>MSQQGESSDPKSGKKDFSTAILERKKSPNRLVVDEAVNDDNSVVTMHPQTMEKLQLFRGDTILIKGKKRKDTICIALADENCEEPKIRMNKVVRSNLRVRLGDVVSVHQCPDVKYGKRVHILPIDDTIEGVTGNLFDAFLKPYFLEAYRPVRKGDLFLVRGGMRSVEFKVVETDPGEYCVVAPDTEIFCEGEPLKREDEERLDEVGYDDVGGVRKQMAQIRELVELPLRHPQLFKSIGVKPPKGILLYGPPGSGKTLIARAVANETGAFFFCINGPEIMSKLAGESESNLRKAFEEAEKNAPSIIFIDEIDSIAPKREKTHGEVERRIVSQLLTLMDGLKSRAHVIVIGATNRPNSIDPALRRFGRFDREIDIGVPDEVGRLEVLRIHTKNMKLSDDVDLERIAKDTHGYVGADLAALCTEAALQCIREKMDVIDLEDETIDAEVLNSMAVTNEHFQTALGTSNPSALRETVVEVPNVSWEDIGGLENVKRELQETVQYPVEHPEKFEKFGMSPSKGVLFYGPPGCGKTLLAKAIANECQANFISVKGPELLTMWFGESEANVREIFDKARQSAPCVLFFDELDSIATQRGSSVGDAGGAADRVLNQLLTEMDGMSAKKTVFIIGATNRPDIIDPALLRPGRLDQLIYIPLPDEDSRHQIFKACLRKSPIAKNVDLRALARHTQGFSGADITEICQRACKYAIRENIEKDIERERKSRENPEAMDEDTVDDEVAEIKAAHFEESMKFARRSVSDADIRKYQAFAQTLQQSRGFGSEFRFPESGDRTTTGSDPFAASAGGADEDDLYS</sequence>
<name>CDC48_SOYBN</name>
<proteinExistence type="evidence at transcript level"/>
<protein>
    <recommendedName>
        <fullName>Cell division cycle protein 48 homolog</fullName>
    </recommendedName>
    <alternativeName>
        <fullName>Valosin-containing protein homolog</fullName>
        <shortName>VCP</shortName>
    </alternativeName>
</protein>
<keyword id="KW-0067">ATP-binding</keyword>
<keyword id="KW-0131">Cell cycle</keyword>
<keyword id="KW-1003">Cell membrane</keyword>
<keyword id="KW-0472">Membrane</keyword>
<keyword id="KW-0547">Nucleotide-binding</keyword>
<keyword id="KW-1185">Reference proteome</keyword>
<keyword id="KW-0677">Repeat</keyword>
<gene>
    <name type="primary">CDC48</name>
</gene>
<dbReference type="EMBL" id="U20213">
    <property type="protein sequence ID" value="AAA80587.1"/>
    <property type="molecule type" value="mRNA"/>
</dbReference>
<dbReference type="PIR" id="T06409">
    <property type="entry name" value="T06409"/>
</dbReference>
<dbReference type="RefSeq" id="NP_001235099.1">
    <property type="nucleotide sequence ID" value="NM_001248170.1"/>
</dbReference>
<dbReference type="SMR" id="P54774"/>
<dbReference type="FunCoup" id="P54774">
    <property type="interactions" value="4653"/>
</dbReference>
<dbReference type="STRING" id="3847.P54774"/>
<dbReference type="PaxDb" id="3847-GLYMA13G39830.1"/>
<dbReference type="ProMEX" id="P54774"/>
<dbReference type="EnsemblPlants" id="KRH22853">
    <property type="protein sequence ID" value="KRH22853"/>
    <property type="gene ID" value="GLYMA_13G323600"/>
</dbReference>
<dbReference type="GeneID" id="547850"/>
<dbReference type="Gramene" id="KRH22853">
    <property type="protein sequence ID" value="KRH22853"/>
    <property type="gene ID" value="GLYMA_13G323600"/>
</dbReference>
<dbReference type="KEGG" id="gmx:547850"/>
<dbReference type="eggNOG" id="KOG0730">
    <property type="taxonomic scope" value="Eukaryota"/>
</dbReference>
<dbReference type="HOGENOM" id="CLU_000688_12_3_1"/>
<dbReference type="InParanoid" id="P54774"/>
<dbReference type="OMA" id="TNEHFTT"/>
<dbReference type="OrthoDB" id="27435at2759"/>
<dbReference type="Proteomes" id="UP000008827">
    <property type="component" value="Chromosome 13"/>
</dbReference>
<dbReference type="GO" id="GO:0005829">
    <property type="term" value="C:cytosol"/>
    <property type="evidence" value="ECO:0000318"/>
    <property type="project" value="GO_Central"/>
</dbReference>
<dbReference type="GO" id="GO:0005634">
    <property type="term" value="C:nucleus"/>
    <property type="evidence" value="ECO:0000318"/>
    <property type="project" value="GO_Central"/>
</dbReference>
<dbReference type="GO" id="GO:0005886">
    <property type="term" value="C:plasma membrane"/>
    <property type="evidence" value="ECO:0007669"/>
    <property type="project" value="UniProtKB-SubCell"/>
</dbReference>
<dbReference type="GO" id="GO:0034098">
    <property type="term" value="C:VCP-NPL4-UFD1 AAA ATPase complex"/>
    <property type="evidence" value="ECO:0000318"/>
    <property type="project" value="GO_Central"/>
</dbReference>
<dbReference type="GO" id="GO:0005524">
    <property type="term" value="F:ATP binding"/>
    <property type="evidence" value="ECO:0007669"/>
    <property type="project" value="UniProtKB-KW"/>
</dbReference>
<dbReference type="GO" id="GO:0016887">
    <property type="term" value="F:ATP hydrolysis activity"/>
    <property type="evidence" value="ECO:0000318"/>
    <property type="project" value="GO_Central"/>
</dbReference>
<dbReference type="GO" id="GO:0031593">
    <property type="term" value="F:polyubiquitin modification-dependent protein binding"/>
    <property type="evidence" value="ECO:0000318"/>
    <property type="project" value="GO_Central"/>
</dbReference>
<dbReference type="GO" id="GO:0097352">
    <property type="term" value="P:autophagosome maturation"/>
    <property type="evidence" value="ECO:0000318"/>
    <property type="project" value="GO_Central"/>
</dbReference>
<dbReference type="GO" id="GO:0051228">
    <property type="term" value="P:mitotic spindle disassembly"/>
    <property type="evidence" value="ECO:0000318"/>
    <property type="project" value="GO_Central"/>
</dbReference>
<dbReference type="GO" id="GO:0043161">
    <property type="term" value="P:proteasome-mediated ubiquitin-dependent protein catabolic process"/>
    <property type="evidence" value="ECO:0000318"/>
    <property type="project" value="GO_Central"/>
</dbReference>
<dbReference type="GO" id="GO:0030970">
    <property type="term" value="P:retrograde protein transport, ER to cytosol"/>
    <property type="evidence" value="ECO:0000318"/>
    <property type="project" value="GO_Central"/>
</dbReference>
<dbReference type="CDD" id="cd19519">
    <property type="entry name" value="RecA-like_CDC48_r1-like"/>
    <property type="match status" value="1"/>
</dbReference>
<dbReference type="CDD" id="cd19528">
    <property type="entry name" value="RecA-like_CDC48_r2-like"/>
    <property type="match status" value="1"/>
</dbReference>
<dbReference type="FunFam" id="1.10.8.60:FF:000004">
    <property type="entry name" value="Cell division control 48"/>
    <property type="match status" value="1"/>
</dbReference>
<dbReference type="FunFam" id="3.10.330.10:FF:000001">
    <property type="entry name" value="Cell division control 48"/>
    <property type="match status" value="1"/>
</dbReference>
<dbReference type="FunFam" id="2.40.40.20:FF:000003">
    <property type="entry name" value="Transitional endoplasmic reticulum ATPase"/>
    <property type="match status" value="1"/>
</dbReference>
<dbReference type="FunFam" id="3.40.50.300:FF:000012">
    <property type="entry name" value="Transitional endoplasmic reticulum ATPase"/>
    <property type="match status" value="1"/>
</dbReference>
<dbReference type="FunFam" id="3.40.50.300:FF:000048">
    <property type="entry name" value="Transitional endoplasmic reticulum ATPase"/>
    <property type="match status" value="1"/>
</dbReference>
<dbReference type="Gene3D" id="1.10.8.60">
    <property type="match status" value="1"/>
</dbReference>
<dbReference type="Gene3D" id="2.40.40.20">
    <property type="match status" value="1"/>
</dbReference>
<dbReference type="Gene3D" id="3.10.330.10">
    <property type="match status" value="1"/>
</dbReference>
<dbReference type="Gene3D" id="6.10.20.150">
    <property type="match status" value="1"/>
</dbReference>
<dbReference type="Gene3D" id="3.40.50.300">
    <property type="entry name" value="P-loop containing nucleotide triphosphate hydrolases"/>
    <property type="match status" value="2"/>
</dbReference>
<dbReference type="InterPro" id="IPR003593">
    <property type="entry name" value="AAA+_ATPase"/>
</dbReference>
<dbReference type="InterPro" id="IPR005938">
    <property type="entry name" value="AAA_ATPase_CDC48"/>
</dbReference>
<dbReference type="InterPro" id="IPR050168">
    <property type="entry name" value="AAA_ATPase_domain"/>
</dbReference>
<dbReference type="InterPro" id="IPR041569">
    <property type="entry name" value="AAA_lid_3"/>
</dbReference>
<dbReference type="InterPro" id="IPR009010">
    <property type="entry name" value="Asp_de-COase-like_dom_sf"/>
</dbReference>
<dbReference type="InterPro" id="IPR003959">
    <property type="entry name" value="ATPase_AAA_core"/>
</dbReference>
<dbReference type="InterPro" id="IPR003960">
    <property type="entry name" value="ATPase_AAA_CS"/>
</dbReference>
<dbReference type="InterPro" id="IPR004201">
    <property type="entry name" value="Cdc48_dom2"/>
</dbReference>
<dbReference type="InterPro" id="IPR029067">
    <property type="entry name" value="CDC48_domain_2-like_sf"/>
</dbReference>
<dbReference type="InterPro" id="IPR003338">
    <property type="entry name" value="CDC4_N-term_subdom"/>
</dbReference>
<dbReference type="InterPro" id="IPR027417">
    <property type="entry name" value="P-loop_NTPase"/>
</dbReference>
<dbReference type="NCBIfam" id="TIGR01243">
    <property type="entry name" value="CDC48"/>
    <property type="match status" value="1"/>
</dbReference>
<dbReference type="PANTHER" id="PTHR23077">
    <property type="entry name" value="AAA-FAMILY ATPASE"/>
    <property type="match status" value="1"/>
</dbReference>
<dbReference type="PANTHER" id="PTHR23077:SF188">
    <property type="entry name" value="CELL DIVISION CYCLE PROTEIN 48 HOMOLOG"/>
    <property type="match status" value="1"/>
</dbReference>
<dbReference type="Pfam" id="PF00004">
    <property type="entry name" value="AAA"/>
    <property type="match status" value="2"/>
</dbReference>
<dbReference type="Pfam" id="PF17862">
    <property type="entry name" value="AAA_lid_3"/>
    <property type="match status" value="2"/>
</dbReference>
<dbReference type="Pfam" id="PF02933">
    <property type="entry name" value="CDC48_2"/>
    <property type="match status" value="1"/>
</dbReference>
<dbReference type="Pfam" id="PF02359">
    <property type="entry name" value="CDC48_N"/>
    <property type="match status" value="1"/>
</dbReference>
<dbReference type="SMART" id="SM00382">
    <property type="entry name" value="AAA"/>
    <property type="match status" value="2"/>
</dbReference>
<dbReference type="SMART" id="SM01072">
    <property type="entry name" value="CDC48_2"/>
    <property type="match status" value="1"/>
</dbReference>
<dbReference type="SMART" id="SM01073">
    <property type="entry name" value="CDC48_N"/>
    <property type="match status" value="1"/>
</dbReference>
<dbReference type="SUPFAM" id="SSF50692">
    <property type="entry name" value="ADC-like"/>
    <property type="match status" value="1"/>
</dbReference>
<dbReference type="SUPFAM" id="SSF54585">
    <property type="entry name" value="Cdc48 domain 2-like"/>
    <property type="match status" value="1"/>
</dbReference>
<dbReference type="SUPFAM" id="SSF52540">
    <property type="entry name" value="P-loop containing nucleoside triphosphate hydrolases"/>
    <property type="match status" value="2"/>
</dbReference>
<dbReference type="PROSITE" id="PS00674">
    <property type="entry name" value="AAA"/>
    <property type="match status" value="2"/>
</dbReference>
<reference key="1">
    <citation type="journal article" date="1995" name="Proc. Natl. Acad. Sci. U.S.A.">
        <title>Identification of cDNA clones encoding valosin-containing protein and other plant plasma membrane-associated proteins by a general immunoscreening strategy.</title>
        <authorList>
            <person name="Shi J."/>
            <person name="Dixon R.A."/>
            <person name="Gonzales R.A."/>
            <person name="Kjellbom P."/>
            <person name="Bhattacharyya M.K."/>
        </authorList>
    </citation>
    <scope>NUCLEOTIDE SEQUENCE [MRNA]</scope>
    <source>
        <strain>cv. Williams 82</strain>
        <tissue>Etiolated hypocotyl</tissue>
    </source>
</reference>
<accession>P54774</accession>
<feature type="chain" id="PRO_0000084585" description="Cell division cycle protein 48 homolog">
    <location>
        <begin position="1"/>
        <end position="807"/>
    </location>
</feature>
<feature type="region of interest" description="Disordered" evidence="2">
    <location>
        <begin position="1"/>
        <end position="21"/>
    </location>
</feature>
<feature type="region of interest" description="Disordered" evidence="2">
    <location>
        <begin position="771"/>
        <end position="807"/>
    </location>
</feature>
<feature type="compositionally biased region" description="Basic and acidic residues" evidence="2">
    <location>
        <begin position="8"/>
        <end position="21"/>
    </location>
</feature>
<feature type="binding site" evidence="1">
    <location>
        <begin position="249"/>
        <end position="256"/>
    </location>
    <ligand>
        <name>ATP</name>
        <dbReference type="ChEBI" id="CHEBI:30616"/>
    </ligand>
</feature>
<feature type="binding site" evidence="1">
    <location>
        <begin position="522"/>
        <end position="529"/>
    </location>
    <ligand>
        <name>ATP</name>
        <dbReference type="ChEBI" id="CHEBI:30616"/>
    </ligand>
</feature>